<sequence>MKIRASVRKICEKCRLIRRRGRIIVICSNPRHKQRQG</sequence>
<gene>
    <name evidence="1" type="primary">rpl36</name>
</gene>
<dbReference type="EMBL" id="AP009372">
    <property type="protein sequence ID" value="BAF50320.1"/>
    <property type="molecule type" value="Genomic_DNA"/>
</dbReference>
<dbReference type="RefSeq" id="YP_001123496.1">
    <property type="nucleotide sequence ID" value="NC_009271.1"/>
</dbReference>
<dbReference type="SMR" id="A4QKW5"/>
<dbReference type="GeneID" id="4962756"/>
<dbReference type="GO" id="GO:0009507">
    <property type="term" value="C:chloroplast"/>
    <property type="evidence" value="ECO:0007669"/>
    <property type="project" value="UniProtKB-SubCell"/>
</dbReference>
<dbReference type="GO" id="GO:1990904">
    <property type="term" value="C:ribonucleoprotein complex"/>
    <property type="evidence" value="ECO:0007669"/>
    <property type="project" value="UniProtKB-KW"/>
</dbReference>
<dbReference type="GO" id="GO:0005840">
    <property type="term" value="C:ribosome"/>
    <property type="evidence" value="ECO:0007669"/>
    <property type="project" value="UniProtKB-KW"/>
</dbReference>
<dbReference type="GO" id="GO:0003735">
    <property type="term" value="F:structural constituent of ribosome"/>
    <property type="evidence" value="ECO:0007669"/>
    <property type="project" value="InterPro"/>
</dbReference>
<dbReference type="GO" id="GO:0006412">
    <property type="term" value="P:translation"/>
    <property type="evidence" value="ECO:0007669"/>
    <property type="project" value="UniProtKB-UniRule"/>
</dbReference>
<dbReference type="HAMAP" id="MF_00251">
    <property type="entry name" value="Ribosomal_bL36"/>
    <property type="match status" value="1"/>
</dbReference>
<dbReference type="InterPro" id="IPR000473">
    <property type="entry name" value="Ribosomal_bL36"/>
</dbReference>
<dbReference type="InterPro" id="IPR035977">
    <property type="entry name" value="Ribosomal_bL36_sp"/>
</dbReference>
<dbReference type="NCBIfam" id="TIGR01022">
    <property type="entry name" value="rpmJ_bact"/>
    <property type="match status" value="1"/>
</dbReference>
<dbReference type="PANTHER" id="PTHR42888">
    <property type="entry name" value="50S RIBOSOMAL PROTEIN L36, CHLOROPLASTIC"/>
    <property type="match status" value="1"/>
</dbReference>
<dbReference type="PANTHER" id="PTHR42888:SF1">
    <property type="entry name" value="LARGE RIBOSOMAL SUBUNIT PROTEIN BL36C"/>
    <property type="match status" value="1"/>
</dbReference>
<dbReference type="Pfam" id="PF00444">
    <property type="entry name" value="Ribosomal_L36"/>
    <property type="match status" value="1"/>
</dbReference>
<dbReference type="SUPFAM" id="SSF57840">
    <property type="entry name" value="Ribosomal protein L36"/>
    <property type="match status" value="1"/>
</dbReference>
<dbReference type="PROSITE" id="PS00828">
    <property type="entry name" value="RIBOSOMAL_L36"/>
    <property type="match status" value="1"/>
</dbReference>
<geneLocation type="chloroplast"/>
<feature type="chain" id="PRO_0000344751" description="Large ribosomal subunit protein bL36c">
    <location>
        <begin position="1"/>
        <end position="37"/>
    </location>
</feature>
<organism>
    <name type="scientific">Crucihimalaya wallichii</name>
    <name type="common">Rock-cress</name>
    <name type="synonym">Arabidopsis campestris</name>
    <dbReference type="NCBI Taxonomy" id="78192"/>
    <lineage>
        <taxon>Eukaryota</taxon>
        <taxon>Viridiplantae</taxon>
        <taxon>Streptophyta</taxon>
        <taxon>Embryophyta</taxon>
        <taxon>Tracheophyta</taxon>
        <taxon>Spermatophyta</taxon>
        <taxon>Magnoliopsida</taxon>
        <taxon>eudicotyledons</taxon>
        <taxon>Gunneridae</taxon>
        <taxon>Pentapetalae</taxon>
        <taxon>rosids</taxon>
        <taxon>malvids</taxon>
        <taxon>Brassicales</taxon>
        <taxon>Brassicaceae</taxon>
        <taxon>Crucihimalayeae</taxon>
        <taxon>Crucihimalaya</taxon>
    </lineage>
</organism>
<name>RK36_CRUWA</name>
<keyword id="KW-0150">Chloroplast</keyword>
<keyword id="KW-0934">Plastid</keyword>
<keyword id="KW-0687">Ribonucleoprotein</keyword>
<keyword id="KW-0689">Ribosomal protein</keyword>
<proteinExistence type="inferred from homology"/>
<comment type="subcellular location">
    <subcellularLocation>
        <location>Plastid</location>
        <location>Chloroplast</location>
    </subcellularLocation>
</comment>
<comment type="similarity">
    <text evidence="1">Belongs to the bacterial ribosomal protein bL36 family.</text>
</comment>
<accession>A4QKW5</accession>
<reference key="1">
    <citation type="submission" date="2007-03" db="EMBL/GenBank/DDBJ databases">
        <title>Sequencing analysis of Crucihimalaya wallichii chloroplast DNA.</title>
        <authorList>
            <person name="Hosouchi T."/>
            <person name="Tsuruoka H."/>
            <person name="Kotani H."/>
        </authorList>
    </citation>
    <scope>NUCLEOTIDE SEQUENCE [LARGE SCALE GENOMIC DNA]</scope>
</reference>
<protein>
    <recommendedName>
        <fullName evidence="1">Large ribosomal subunit protein bL36c</fullName>
    </recommendedName>
    <alternativeName>
        <fullName evidence="2">50S ribosomal protein L36, chloroplastic</fullName>
    </alternativeName>
</protein>
<evidence type="ECO:0000255" key="1">
    <source>
        <dbReference type="HAMAP-Rule" id="MF_00251"/>
    </source>
</evidence>
<evidence type="ECO:0000305" key="2"/>